<proteinExistence type="inferred from homology"/>
<reference key="1">
    <citation type="submission" date="2005-09" db="EMBL/GenBank/DDBJ databases">
        <title>Annotation of the Aspergillus terreus NIH2624 genome.</title>
        <authorList>
            <person name="Birren B.W."/>
            <person name="Lander E.S."/>
            <person name="Galagan J.E."/>
            <person name="Nusbaum C."/>
            <person name="Devon K."/>
            <person name="Henn M."/>
            <person name="Ma L.-J."/>
            <person name="Jaffe D.B."/>
            <person name="Butler J."/>
            <person name="Alvarez P."/>
            <person name="Gnerre S."/>
            <person name="Grabherr M."/>
            <person name="Kleber M."/>
            <person name="Mauceli E.W."/>
            <person name="Brockman W."/>
            <person name="Rounsley S."/>
            <person name="Young S.K."/>
            <person name="LaButti K."/>
            <person name="Pushparaj V."/>
            <person name="DeCaprio D."/>
            <person name="Crawford M."/>
            <person name="Koehrsen M."/>
            <person name="Engels R."/>
            <person name="Montgomery P."/>
            <person name="Pearson M."/>
            <person name="Howarth C."/>
            <person name="Larson L."/>
            <person name="Luoma S."/>
            <person name="White J."/>
            <person name="Alvarado L."/>
            <person name="Kodira C.D."/>
            <person name="Zeng Q."/>
            <person name="Oleary S."/>
            <person name="Yandava C."/>
            <person name="Denning D.W."/>
            <person name="Nierman W.C."/>
            <person name="Milne T."/>
            <person name="Madden K."/>
        </authorList>
    </citation>
    <scope>NUCLEOTIDE SEQUENCE [LARGE SCALE GENOMIC DNA]</scope>
    <source>
        <strain>NIH 2624 / FGSC A1156</strain>
    </source>
</reference>
<reference key="2">
    <citation type="journal article" date="2014" name="Org. Lett.">
        <title>Molecular genetic characterization of terreic acid pathway in Aspergillus terreus.</title>
        <authorList>
            <person name="Guo C.J."/>
            <person name="Sun W.W."/>
            <person name="Bruno K.S."/>
            <person name="Wang C.C."/>
        </authorList>
    </citation>
    <scope>FUNCTION</scope>
    <scope>DISRUPTION PHENOTYPE</scope>
</reference>
<dbReference type="EMBL" id="CH476602">
    <property type="protein sequence ID" value="EAU32822.1"/>
    <property type="molecule type" value="Genomic_DNA"/>
</dbReference>
<dbReference type="RefSeq" id="XP_001215456.1">
    <property type="nucleotide sequence ID" value="XM_001215456.1"/>
</dbReference>
<dbReference type="SMR" id="Q0CJ56"/>
<dbReference type="STRING" id="341663.Q0CJ56"/>
<dbReference type="EnsemblFungi" id="EAU32822">
    <property type="protein sequence ID" value="EAU32822"/>
    <property type="gene ID" value="ATEG_06278"/>
</dbReference>
<dbReference type="GeneID" id="4322427"/>
<dbReference type="VEuPathDB" id="FungiDB:ATEG_06278"/>
<dbReference type="eggNOG" id="ENOG502SIGA">
    <property type="taxonomic scope" value="Eukaryota"/>
</dbReference>
<dbReference type="HOGENOM" id="CLU_016509_0_0_1"/>
<dbReference type="OMA" id="CDWCRLN"/>
<dbReference type="OrthoDB" id="2283488at2759"/>
<dbReference type="Proteomes" id="UP000007963">
    <property type="component" value="Unassembled WGS sequence"/>
</dbReference>
<dbReference type="GO" id="GO:0005634">
    <property type="term" value="C:nucleus"/>
    <property type="evidence" value="ECO:0007669"/>
    <property type="project" value="UniProtKB-SubCell"/>
</dbReference>
<dbReference type="GO" id="GO:0000981">
    <property type="term" value="F:DNA-binding transcription factor activity, RNA polymerase II-specific"/>
    <property type="evidence" value="ECO:0007669"/>
    <property type="project" value="InterPro"/>
</dbReference>
<dbReference type="GO" id="GO:0000978">
    <property type="term" value="F:RNA polymerase II cis-regulatory region sequence-specific DNA binding"/>
    <property type="evidence" value="ECO:0007669"/>
    <property type="project" value="TreeGrafter"/>
</dbReference>
<dbReference type="GO" id="GO:0008270">
    <property type="term" value="F:zinc ion binding"/>
    <property type="evidence" value="ECO:0007669"/>
    <property type="project" value="InterPro"/>
</dbReference>
<dbReference type="GO" id="GO:0006351">
    <property type="term" value="P:DNA-templated transcription"/>
    <property type="evidence" value="ECO:0007669"/>
    <property type="project" value="InterPro"/>
</dbReference>
<dbReference type="GO" id="GO:0000435">
    <property type="term" value="P:positive regulation of transcription from RNA polymerase II promoter by galactose"/>
    <property type="evidence" value="ECO:0007669"/>
    <property type="project" value="TreeGrafter"/>
</dbReference>
<dbReference type="CDD" id="cd12148">
    <property type="entry name" value="fungal_TF_MHR"/>
    <property type="match status" value="1"/>
</dbReference>
<dbReference type="CDD" id="cd00067">
    <property type="entry name" value="GAL4"/>
    <property type="match status" value="1"/>
</dbReference>
<dbReference type="Gene3D" id="4.10.240.10">
    <property type="entry name" value="Zn(2)-C6 fungal-type DNA-binding domain"/>
    <property type="match status" value="1"/>
</dbReference>
<dbReference type="InterPro" id="IPR051127">
    <property type="entry name" value="Fungal_SecMet_Regulators"/>
</dbReference>
<dbReference type="InterPro" id="IPR007219">
    <property type="entry name" value="Transcription_factor_dom_fun"/>
</dbReference>
<dbReference type="InterPro" id="IPR036864">
    <property type="entry name" value="Zn2-C6_fun-type_DNA-bd_sf"/>
</dbReference>
<dbReference type="InterPro" id="IPR001138">
    <property type="entry name" value="Zn2Cys6_DnaBD"/>
</dbReference>
<dbReference type="PANTHER" id="PTHR47424">
    <property type="entry name" value="REGULATORY PROTEIN GAL4"/>
    <property type="match status" value="1"/>
</dbReference>
<dbReference type="PANTHER" id="PTHR47424:SF12">
    <property type="entry name" value="TRANSCRIPTION FACTOR ASQA"/>
    <property type="match status" value="1"/>
</dbReference>
<dbReference type="Pfam" id="PF04082">
    <property type="entry name" value="Fungal_trans"/>
    <property type="match status" value="1"/>
</dbReference>
<dbReference type="Pfam" id="PF00172">
    <property type="entry name" value="Zn_clus"/>
    <property type="match status" value="1"/>
</dbReference>
<dbReference type="SMART" id="SM00906">
    <property type="entry name" value="Fungal_trans"/>
    <property type="match status" value="1"/>
</dbReference>
<dbReference type="SMART" id="SM00066">
    <property type="entry name" value="GAL4"/>
    <property type="match status" value="1"/>
</dbReference>
<dbReference type="SUPFAM" id="SSF57701">
    <property type="entry name" value="Zn2/Cys6 DNA-binding domain"/>
    <property type="match status" value="1"/>
</dbReference>
<dbReference type="PROSITE" id="PS00463">
    <property type="entry name" value="ZN2_CY6_FUNGAL_1"/>
    <property type="match status" value="1"/>
</dbReference>
<dbReference type="PROSITE" id="PS50048">
    <property type="entry name" value="ZN2_CY6_FUNGAL_2"/>
    <property type="match status" value="1"/>
</dbReference>
<gene>
    <name evidence="4" type="primary">atF</name>
    <name type="ORF">ATEG_06278</name>
</gene>
<name>ATF_ASPTN</name>
<keyword id="KW-0238">DNA-binding</keyword>
<keyword id="KW-0479">Metal-binding</keyword>
<keyword id="KW-0539">Nucleus</keyword>
<keyword id="KW-1185">Reference proteome</keyword>
<keyword id="KW-0804">Transcription</keyword>
<keyword id="KW-0805">Transcription regulation</keyword>
<keyword id="KW-0862">Zinc</keyword>
<evidence type="ECO:0000255" key="1">
    <source>
        <dbReference type="PROSITE-ProRule" id="PRU00227"/>
    </source>
</evidence>
<evidence type="ECO:0000256" key="2">
    <source>
        <dbReference type="SAM" id="MobiDB-lite"/>
    </source>
</evidence>
<evidence type="ECO:0000269" key="3">
    <source>
    </source>
</evidence>
<evidence type="ECO:0000303" key="4">
    <source>
    </source>
</evidence>
<evidence type="ECO:0000305" key="5"/>
<organism>
    <name type="scientific">Aspergillus terreus (strain NIH 2624 / FGSC A1156)</name>
    <dbReference type="NCBI Taxonomy" id="341663"/>
    <lineage>
        <taxon>Eukaryota</taxon>
        <taxon>Fungi</taxon>
        <taxon>Dikarya</taxon>
        <taxon>Ascomycota</taxon>
        <taxon>Pezizomycotina</taxon>
        <taxon>Eurotiomycetes</taxon>
        <taxon>Eurotiomycetidae</taxon>
        <taxon>Eurotiales</taxon>
        <taxon>Aspergillaceae</taxon>
        <taxon>Aspergillus</taxon>
        <taxon>Aspergillus subgen. Circumdati</taxon>
    </lineage>
</organism>
<protein>
    <recommendedName>
        <fullName evidence="5">Terreic acid cluster-specific transcription factor atF</fullName>
    </recommendedName>
    <alternativeName>
        <fullName evidence="4">Terreic acid biosynthesis cluster protein R</fullName>
    </alternativeName>
</protein>
<accession>Q0CJ56</accession>
<feature type="chain" id="PRO_0000437641" description="Terreic acid cluster-specific transcription factor atF">
    <location>
        <begin position="1"/>
        <end position="663"/>
    </location>
</feature>
<feature type="DNA-binding region" description="Zn(2)-C6 fungal-type" evidence="1">
    <location>
        <begin position="34"/>
        <end position="60"/>
    </location>
</feature>
<feature type="region of interest" description="Disordered" evidence="2">
    <location>
        <begin position="1"/>
        <end position="28"/>
    </location>
</feature>
<feature type="region of interest" description="Disordered" evidence="2">
    <location>
        <begin position="55"/>
        <end position="126"/>
    </location>
</feature>
<feature type="compositionally biased region" description="Polar residues" evidence="2">
    <location>
        <begin position="1"/>
        <end position="20"/>
    </location>
</feature>
<feature type="compositionally biased region" description="Basic residues" evidence="2">
    <location>
        <begin position="55"/>
        <end position="64"/>
    </location>
</feature>
<feature type="compositionally biased region" description="Low complexity" evidence="2">
    <location>
        <begin position="73"/>
        <end position="88"/>
    </location>
</feature>
<feature type="compositionally biased region" description="Low complexity" evidence="2">
    <location>
        <begin position="105"/>
        <end position="125"/>
    </location>
</feature>
<comment type="function">
    <text evidence="3">Transcription factor that regulates the expression of the gene cluster that mediates the biosynthesis of terreic acid, a quinone epoxide inhibitor of Bruton's tyrosine kinase (PubMed:25265334).</text>
</comment>
<comment type="subcellular location">
    <subcellularLocation>
        <location evidence="1">Nucleus</location>
    </subcellularLocation>
</comment>
<comment type="disruption phenotype">
    <text evidence="3">Abolishes the production of terreic acid but not other types of secondary metabolites (PubMed:25265334).</text>
</comment>
<sequence length="663" mass="74061">MFATFNSSMDNRSSANSPVAPSSRPKRTTVARACDWCRLNRVKCDDGQPCKNCRTRGVRCRKGSKSGEHNRPSSSAAASERARSQGAQMEPNQGNARAEEREKAATTSRRNSRTPSSSPSSPSPSQWRWPGAWIVDSVHTNSEPRYYGPSSFLHFTNRLRIYLDESLGQPQLGNALLSFTCSRVSSPSPNAMDDADLTEGTLTRQQEEYLLSLYWQSYHTIIPIVDADDFCAHYRSLWEPGQGATRRPSALVDIVLALCMQYSAALMASGDIELMDLESNDTNASGHWLYQRCQRLLLKDQDTLSLATLQTYIHSAVYLMNASCLNASHRVLSIAIHTATSLGLPHSPEGHPRGPQHALRQRIWWTLFFLDSKMSFELGQPYLMPEYHGTVDLSGSLELRIIENCRSVSTFGDITWLRYHDECLKLTSKVRHISNVAFEKSSEAMSRHSGTSIYENPSALEKGVSYLHKSMEALQAWSREVPTSLKLARKGNVSPFSTARCPLENDVYAPLWLQRQRVLLELLYHNLVMGLYRPYIRVADQSAVTSHAIGPTASHTSDSSSLCALNHAMATINIVYQVLTETDILNSWNRAFQYTWDATLTVLGFRLVHPGCPHSFSARRATAIANESFKIFSQYGYSGAAQAMTVTRELDRSIDLAVSREPG</sequence>